<proteinExistence type="inferred from homology"/>
<reference key="1">
    <citation type="journal article" date="2011" name="Environ. Microbiol.">
        <title>Genome of alkaliphilic Bacillus pseudofirmus OF4 reveals adaptations that support the ability to grow in an external pH range from 7.5 to 11.4.</title>
        <authorList>
            <person name="Janto B."/>
            <person name="Ahmed A."/>
            <person name="Ito M."/>
            <person name="Liu J."/>
            <person name="Hicks D.B."/>
            <person name="Pagni S."/>
            <person name="Fackelmayer O.J."/>
            <person name="Smith T.A."/>
            <person name="Earl J."/>
            <person name="Elbourne L.D."/>
            <person name="Hassan K."/>
            <person name="Paulsen I.T."/>
            <person name="Kolsto A.B."/>
            <person name="Tourasse N.J."/>
            <person name="Ehrlich G.D."/>
            <person name="Boissy R."/>
            <person name="Ivey D.M."/>
            <person name="Li G."/>
            <person name="Xue Y."/>
            <person name="Ma Y."/>
            <person name="Hu F.Z."/>
            <person name="Krulwich T.A."/>
        </authorList>
    </citation>
    <scope>NUCLEOTIDE SEQUENCE [LARGE SCALE GENOMIC DNA]</scope>
    <source>
        <strain>ATCC BAA-2126 / JCM 17055 / OF4</strain>
    </source>
</reference>
<reference key="2">
    <citation type="submission" date="1996-06" db="EMBL/GenBank/DDBJ databases">
        <title>Cloning and sequence of gerC locus from alkaliphilic Bacillus firmus OF4.</title>
        <authorList>
            <person name="Ito M."/>
            <person name="Krulwich T.A."/>
        </authorList>
    </citation>
    <scope>NUCLEOTIDE SEQUENCE [GENOMIC DNA] OF 16-236</scope>
</reference>
<keyword id="KW-0474">Menaquinone biosynthesis</keyword>
<keyword id="KW-0489">Methyltransferase</keyword>
<keyword id="KW-1185">Reference proteome</keyword>
<keyword id="KW-0949">S-adenosyl-L-methionine</keyword>
<keyword id="KW-0808">Transferase</keyword>
<feature type="chain" id="PRO_0000193244" description="Demethylmenaquinone methyltransferase">
    <location>
        <begin position="1"/>
        <end position="236"/>
    </location>
</feature>
<feature type="binding site" evidence="1">
    <location>
        <position position="58"/>
    </location>
    <ligand>
        <name>S-adenosyl-L-methionine</name>
        <dbReference type="ChEBI" id="CHEBI:59789"/>
    </ligand>
</feature>
<feature type="binding site" evidence="1">
    <location>
        <position position="79"/>
    </location>
    <ligand>
        <name>S-adenosyl-L-methionine</name>
        <dbReference type="ChEBI" id="CHEBI:59789"/>
    </ligand>
</feature>
<feature type="binding site" evidence="1">
    <location>
        <begin position="106"/>
        <end position="107"/>
    </location>
    <ligand>
        <name>S-adenosyl-L-methionine</name>
        <dbReference type="ChEBI" id="CHEBI:59789"/>
    </ligand>
</feature>
<sequence length="236" mass="27264">MTQTKEERVHQVFESIYKRYDMMNSVISFQRHKAWRKDTMKRMKVQPGDHALDVCCGTADWTIALGEAVGHNGKVEGLDFSKNMLLIGEEKVKEHKMKHVSLRHGNAMELPYADETFDVVTIGFGLRNVPDYMQVLKEMHRVVKKGGKVVCLETSQPTIPVFKNLYFFYFRRVMPVFGKVFAKSYDEYSWLQESTMSFPNREKLAEMFREAGFERVDVKPYSGGVACMHLGVKGKN</sequence>
<evidence type="ECO:0000255" key="1">
    <source>
        <dbReference type="HAMAP-Rule" id="MF_01813"/>
    </source>
</evidence>
<protein>
    <recommendedName>
        <fullName evidence="1">Demethylmenaquinone methyltransferase</fullName>
        <ecNumber evidence="1">2.1.1.163</ecNumber>
    </recommendedName>
</protein>
<gene>
    <name evidence="1" type="primary">menG</name>
    <name type="synonym">gerC2</name>
    <name type="ordered locus">BpOF4_15400</name>
</gene>
<name>MENG_ALKPO</name>
<accession>P94298</accession>
<accession>D3G044</accession>
<organism>
    <name type="scientific">Alkalihalophilus pseudofirmus (strain ATCC BAA-2126 / JCM 17055 / OF4)</name>
    <name type="common">Bacillus pseudofirmus</name>
    <dbReference type="NCBI Taxonomy" id="398511"/>
    <lineage>
        <taxon>Bacteria</taxon>
        <taxon>Bacillati</taxon>
        <taxon>Bacillota</taxon>
        <taxon>Bacilli</taxon>
        <taxon>Bacillales</taxon>
        <taxon>Bacillaceae</taxon>
        <taxon>Alkalihalophilus</taxon>
    </lineage>
</organism>
<comment type="function">
    <text evidence="1">Methyltransferase required for the conversion of demethylmenaquinol (DMKH2) to menaquinol (MKH2).</text>
</comment>
<comment type="catalytic activity">
    <reaction evidence="1">
        <text>a 2-demethylmenaquinol + S-adenosyl-L-methionine = a menaquinol + S-adenosyl-L-homocysteine + H(+)</text>
        <dbReference type="Rhea" id="RHEA:42640"/>
        <dbReference type="Rhea" id="RHEA-COMP:9539"/>
        <dbReference type="Rhea" id="RHEA-COMP:9563"/>
        <dbReference type="ChEBI" id="CHEBI:15378"/>
        <dbReference type="ChEBI" id="CHEBI:18151"/>
        <dbReference type="ChEBI" id="CHEBI:55437"/>
        <dbReference type="ChEBI" id="CHEBI:57856"/>
        <dbReference type="ChEBI" id="CHEBI:59789"/>
        <dbReference type="EC" id="2.1.1.163"/>
    </reaction>
</comment>
<comment type="pathway">
    <text evidence="1">Quinol/quinone metabolism; menaquinone biosynthesis; menaquinol from 1,4-dihydroxy-2-naphthoate: step 2/2.</text>
</comment>
<comment type="similarity">
    <text evidence="1">Belongs to the class I-like SAM-binding methyltransferase superfamily. MenG/UbiE family.</text>
</comment>
<dbReference type="EC" id="2.1.1.163" evidence="1"/>
<dbReference type="EMBL" id="CP001878">
    <property type="protein sequence ID" value="ADC51129.1"/>
    <property type="molecule type" value="Genomic_DNA"/>
</dbReference>
<dbReference type="EMBL" id="U61168">
    <property type="protein sequence ID" value="AAB41843.1"/>
    <property type="molecule type" value="Genomic_DNA"/>
</dbReference>
<dbReference type="RefSeq" id="WP_012958491.1">
    <property type="nucleotide sequence ID" value="NC_013791.2"/>
</dbReference>
<dbReference type="SMR" id="P94298"/>
<dbReference type="STRING" id="398511.BpOF4_15400"/>
<dbReference type="KEGG" id="bpf:BpOF4_15400"/>
<dbReference type="eggNOG" id="COG2226">
    <property type="taxonomic scope" value="Bacteria"/>
</dbReference>
<dbReference type="HOGENOM" id="CLU_037990_0_0_9"/>
<dbReference type="UniPathway" id="UPA00079">
    <property type="reaction ID" value="UER00169"/>
</dbReference>
<dbReference type="Proteomes" id="UP000001544">
    <property type="component" value="Chromosome"/>
</dbReference>
<dbReference type="GO" id="GO:0043770">
    <property type="term" value="F:demethylmenaquinone methyltransferase activity"/>
    <property type="evidence" value="ECO:0007669"/>
    <property type="project" value="UniProtKB-UniRule"/>
</dbReference>
<dbReference type="GO" id="GO:0009234">
    <property type="term" value="P:menaquinone biosynthetic process"/>
    <property type="evidence" value="ECO:0007669"/>
    <property type="project" value="UniProtKB-UniRule"/>
</dbReference>
<dbReference type="GO" id="GO:0032259">
    <property type="term" value="P:methylation"/>
    <property type="evidence" value="ECO:0007669"/>
    <property type="project" value="UniProtKB-KW"/>
</dbReference>
<dbReference type="CDD" id="cd02440">
    <property type="entry name" value="AdoMet_MTases"/>
    <property type="match status" value="1"/>
</dbReference>
<dbReference type="FunFam" id="3.40.50.150:FF:000086">
    <property type="entry name" value="Demethylmenaquinone methyltransferase"/>
    <property type="match status" value="1"/>
</dbReference>
<dbReference type="Gene3D" id="3.40.50.150">
    <property type="entry name" value="Vaccinia Virus protein VP39"/>
    <property type="match status" value="1"/>
</dbReference>
<dbReference type="HAMAP" id="MF_01813">
    <property type="entry name" value="MenG_UbiE_methyltr"/>
    <property type="match status" value="1"/>
</dbReference>
<dbReference type="InterPro" id="IPR014122">
    <property type="entry name" value="MenG_heptapren"/>
</dbReference>
<dbReference type="InterPro" id="IPR029063">
    <property type="entry name" value="SAM-dependent_MTases_sf"/>
</dbReference>
<dbReference type="InterPro" id="IPR004033">
    <property type="entry name" value="UbiE/COQ5_MeTrFase"/>
</dbReference>
<dbReference type="InterPro" id="IPR023576">
    <property type="entry name" value="UbiE/COQ5_MeTrFase_CS"/>
</dbReference>
<dbReference type="NCBIfam" id="TIGR02752">
    <property type="entry name" value="MenG_heptapren"/>
    <property type="match status" value="1"/>
</dbReference>
<dbReference type="NCBIfam" id="TIGR01934">
    <property type="entry name" value="MenG_MenH_UbiE"/>
    <property type="match status" value="1"/>
</dbReference>
<dbReference type="NCBIfam" id="NF001243">
    <property type="entry name" value="PRK00216.1-4"/>
    <property type="match status" value="1"/>
</dbReference>
<dbReference type="NCBIfam" id="NF001244">
    <property type="entry name" value="PRK00216.1-5"/>
    <property type="match status" value="1"/>
</dbReference>
<dbReference type="PANTHER" id="PTHR43591:SF24">
    <property type="entry name" value="2-METHOXY-6-POLYPRENYL-1,4-BENZOQUINOL METHYLASE, MITOCHONDRIAL"/>
    <property type="match status" value="1"/>
</dbReference>
<dbReference type="PANTHER" id="PTHR43591">
    <property type="entry name" value="METHYLTRANSFERASE"/>
    <property type="match status" value="1"/>
</dbReference>
<dbReference type="Pfam" id="PF01209">
    <property type="entry name" value="Ubie_methyltran"/>
    <property type="match status" value="1"/>
</dbReference>
<dbReference type="SUPFAM" id="SSF53335">
    <property type="entry name" value="S-adenosyl-L-methionine-dependent methyltransferases"/>
    <property type="match status" value="1"/>
</dbReference>
<dbReference type="PROSITE" id="PS51608">
    <property type="entry name" value="SAM_MT_UBIE"/>
    <property type="match status" value="1"/>
</dbReference>
<dbReference type="PROSITE" id="PS01183">
    <property type="entry name" value="UBIE_1"/>
    <property type="match status" value="1"/>
</dbReference>
<dbReference type="PROSITE" id="PS01184">
    <property type="entry name" value="UBIE_2"/>
    <property type="match status" value="1"/>
</dbReference>